<organism>
    <name type="scientific">Pseudomonas syringae pv. syringae (strain B728a)</name>
    <dbReference type="NCBI Taxonomy" id="205918"/>
    <lineage>
        <taxon>Bacteria</taxon>
        <taxon>Pseudomonadati</taxon>
        <taxon>Pseudomonadota</taxon>
        <taxon>Gammaproteobacteria</taxon>
        <taxon>Pseudomonadales</taxon>
        <taxon>Pseudomonadaceae</taxon>
        <taxon>Pseudomonas</taxon>
        <taxon>Pseudomonas syringae</taxon>
    </lineage>
</organism>
<evidence type="ECO:0000255" key="1">
    <source>
        <dbReference type="HAMAP-Rule" id="MF_01576"/>
    </source>
</evidence>
<proteinExistence type="inferred from homology"/>
<comment type="function">
    <text evidence="1">Catalyzes the oxidation of 5,10-methylenetetrahydrofolate to 5,10-methenyltetrahydrofolate and then the hydrolysis of 5,10-methenyltetrahydrofolate to 10-formyltetrahydrofolate.</text>
</comment>
<comment type="catalytic activity">
    <reaction evidence="1">
        <text>(6R)-5,10-methylene-5,6,7,8-tetrahydrofolate + NADP(+) = (6R)-5,10-methenyltetrahydrofolate + NADPH</text>
        <dbReference type="Rhea" id="RHEA:22812"/>
        <dbReference type="ChEBI" id="CHEBI:15636"/>
        <dbReference type="ChEBI" id="CHEBI:57455"/>
        <dbReference type="ChEBI" id="CHEBI:57783"/>
        <dbReference type="ChEBI" id="CHEBI:58349"/>
        <dbReference type="EC" id="1.5.1.5"/>
    </reaction>
</comment>
<comment type="catalytic activity">
    <reaction evidence="1">
        <text>(6R)-5,10-methenyltetrahydrofolate + H2O = (6R)-10-formyltetrahydrofolate + H(+)</text>
        <dbReference type="Rhea" id="RHEA:23700"/>
        <dbReference type="ChEBI" id="CHEBI:15377"/>
        <dbReference type="ChEBI" id="CHEBI:15378"/>
        <dbReference type="ChEBI" id="CHEBI:57455"/>
        <dbReference type="ChEBI" id="CHEBI:195366"/>
        <dbReference type="EC" id="3.5.4.9"/>
    </reaction>
</comment>
<comment type="pathway">
    <text evidence="1">One-carbon metabolism; tetrahydrofolate interconversion.</text>
</comment>
<comment type="subunit">
    <text evidence="1">Homodimer.</text>
</comment>
<comment type="similarity">
    <text evidence="1">Belongs to the tetrahydrofolate dehydrogenase/cyclohydrolase family.</text>
</comment>
<keyword id="KW-0028">Amino-acid biosynthesis</keyword>
<keyword id="KW-0368">Histidine biosynthesis</keyword>
<keyword id="KW-0378">Hydrolase</keyword>
<keyword id="KW-0486">Methionine biosynthesis</keyword>
<keyword id="KW-0511">Multifunctional enzyme</keyword>
<keyword id="KW-0521">NADP</keyword>
<keyword id="KW-0554">One-carbon metabolism</keyword>
<keyword id="KW-0560">Oxidoreductase</keyword>
<keyword id="KW-0658">Purine biosynthesis</keyword>
<name>FOLD2_PSEU2</name>
<sequence length="300" mass="31673">MSAHIIDGKAAAARVLQQVRHDVNILKAEGIEPALAVILVGNDAASEVYVRNKILRAGEAGIRSLEHRLPADSSQARLLALIAELNADNTVNGILLQLPLPAHIDENRVLQAIDPDKDVDGFHSENVGGLSQGRNVLTPCTPSGCLHLLEETCGDLSGKHAVVIGRSNIVGKPMAALLLQAHCSVTVVHSRSTDARALCQLADIVVAAVGRPRLIDASWLKRGAVVIDVGINRIEDHGRSRLVGDVDFASATEVASAITPVPGGVGPMTIAFLMKNTVTAARQQAHAQRSQPEAVCLSTY</sequence>
<accession>Q4ZUA4</accession>
<reference key="1">
    <citation type="journal article" date="2005" name="Proc. Natl. Acad. Sci. U.S.A.">
        <title>Comparison of the complete genome sequences of Pseudomonas syringae pv. syringae B728a and pv. tomato DC3000.</title>
        <authorList>
            <person name="Feil H."/>
            <person name="Feil W.S."/>
            <person name="Chain P."/>
            <person name="Larimer F."/>
            <person name="Dibartolo G."/>
            <person name="Copeland A."/>
            <person name="Lykidis A."/>
            <person name="Trong S."/>
            <person name="Nolan M."/>
            <person name="Goltsman E."/>
            <person name="Thiel J."/>
            <person name="Malfatti S."/>
            <person name="Loper J.E."/>
            <person name="Lapidus A."/>
            <person name="Detter J.C."/>
            <person name="Land M."/>
            <person name="Richardson P.M."/>
            <person name="Kyrpides N.C."/>
            <person name="Ivanova N."/>
            <person name="Lindow S.E."/>
        </authorList>
    </citation>
    <scope>NUCLEOTIDE SEQUENCE [LARGE SCALE GENOMIC DNA]</scope>
    <source>
        <strain>B728a</strain>
    </source>
</reference>
<protein>
    <recommendedName>
        <fullName evidence="1">Bifunctional protein FolD 2</fullName>
    </recommendedName>
    <domain>
        <recommendedName>
            <fullName evidence="1">Methylenetetrahydrofolate dehydrogenase</fullName>
            <ecNumber evidence="1">1.5.1.5</ecNumber>
        </recommendedName>
    </domain>
    <domain>
        <recommendedName>
            <fullName evidence="1">Methenyltetrahydrofolate cyclohydrolase</fullName>
            <ecNumber evidence="1">3.5.4.9</ecNumber>
        </recommendedName>
    </domain>
</protein>
<dbReference type="EC" id="1.5.1.5" evidence="1"/>
<dbReference type="EC" id="3.5.4.9" evidence="1"/>
<dbReference type="EMBL" id="CP000075">
    <property type="protein sequence ID" value="AAY37268.1"/>
    <property type="molecule type" value="Genomic_DNA"/>
</dbReference>
<dbReference type="RefSeq" id="WP_011267523.1">
    <property type="nucleotide sequence ID" value="NC_007005.1"/>
</dbReference>
<dbReference type="RefSeq" id="YP_235306.1">
    <property type="nucleotide sequence ID" value="NC_007005.1"/>
</dbReference>
<dbReference type="SMR" id="Q4ZUA4"/>
<dbReference type="STRING" id="205918.Psyr_2225"/>
<dbReference type="KEGG" id="psb:Psyr_2225"/>
<dbReference type="PATRIC" id="fig|205918.7.peg.2276"/>
<dbReference type="eggNOG" id="COG0190">
    <property type="taxonomic scope" value="Bacteria"/>
</dbReference>
<dbReference type="HOGENOM" id="CLU_034045_2_1_6"/>
<dbReference type="OrthoDB" id="9803580at2"/>
<dbReference type="UniPathway" id="UPA00193"/>
<dbReference type="Proteomes" id="UP000000426">
    <property type="component" value="Chromosome"/>
</dbReference>
<dbReference type="GO" id="GO:0005829">
    <property type="term" value="C:cytosol"/>
    <property type="evidence" value="ECO:0007669"/>
    <property type="project" value="TreeGrafter"/>
</dbReference>
<dbReference type="GO" id="GO:0004477">
    <property type="term" value="F:methenyltetrahydrofolate cyclohydrolase activity"/>
    <property type="evidence" value="ECO:0007669"/>
    <property type="project" value="UniProtKB-UniRule"/>
</dbReference>
<dbReference type="GO" id="GO:0004488">
    <property type="term" value="F:methylenetetrahydrofolate dehydrogenase (NADP+) activity"/>
    <property type="evidence" value="ECO:0007669"/>
    <property type="project" value="UniProtKB-UniRule"/>
</dbReference>
<dbReference type="GO" id="GO:0000105">
    <property type="term" value="P:L-histidine biosynthetic process"/>
    <property type="evidence" value="ECO:0007669"/>
    <property type="project" value="UniProtKB-KW"/>
</dbReference>
<dbReference type="GO" id="GO:0009086">
    <property type="term" value="P:methionine biosynthetic process"/>
    <property type="evidence" value="ECO:0007669"/>
    <property type="project" value="UniProtKB-KW"/>
</dbReference>
<dbReference type="GO" id="GO:0006164">
    <property type="term" value="P:purine nucleotide biosynthetic process"/>
    <property type="evidence" value="ECO:0007669"/>
    <property type="project" value="UniProtKB-KW"/>
</dbReference>
<dbReference type="GO" id="GO:0035999">
    <property type="term" value="P:tetrahydrofolate interconversion"/>
    <property type="evidence" value="ECO:0007669"/>
    <property type="project" value="UniProtKB-UniRule"/>
</dbReference>
<dbReference type="CDD" id="cd01080">
    <property type="entry name" value="NAD_bind_m-THF_DH_Cyclohyd"/>
    <property type="match status" value="1"/>
</dbReference>
<dbReference type="FunFam" id="3.40.50.720:FF:000006">
    <property type="entry name" value="Bifunctional protein FolD"/>
    <property type="match status" value="1"/>
</dbReference>
<dbReference type="FunFam" id="3.40.50.10860:FF:000005">
    <property type="entry name" value="C-1-tetrahydrofolate synthase, cytoplasmic, putative"/>
    <property type="match status" value="1"/>
</dbReference>
<dbReference type="Gene3D" id="3.40.50.10860">
    <property type="entry name" value="Leucine Dehydrogenase, chain A, domain 1"/>
    <property type="match status" value="1"/>
</dbReference>
<dbReference type="Gene3D" id="3.40.50.720">
    <property type="entry name" value="NAD(P)-binding Rossmann-like Domain"/>
    <property type="match status" value="1"/>
</dbReference>
<dbReference type="HAMAP" id="MF_01576">
    <property type="entry name" value="THF_DHG_CYH"/>
    <property type="match status" value="1"/>
</dbReference>
<dbReference type="InterPro" id="IPR046346">
    <property type="entry name" value="Aminoacid_DH-like_N_sf"/>
</dbReference>
<dbReference type="InterPro" id="IPR036291">
    <property type="entry name" value="NAD(P)-bd_dom_sf"/>
</dbReference>
<dbReference type="InterPro" id="IPR000672">
    <property type="entry name" value="THF_DH/CycHdrlase"/>
</dbReference>
<dbReference type="InterPro" id="IPR020630">
    <property type="entry name" value="THF_DH/CycHdrlase_cat_dom"/>
</dbReference>
<dbReference type="InterPro" id="IPR020867">
    <property type="entry name" value="THF_DH/CycHdrlase_CS"/>
</dbReference>
<dbReference type="InterPro" id="IPR020631">
    <property type="entry name" value="THF_DH/CycHdrlase_NAD-bd_dom"/>
</dbReference>
<dbReference type="NCBIfam" id="NF008058">
    <property type="entry name" value="PRK10792.1"/>
    <property type="match status" value="1"/>
</dbReference>
<dbReference type="NCBIfam" id="NF010783">
    <property type="entry name" value="PRK14186.1"/>
    <property type="match status" value="1"/>
</dbReference>
<dbReference type="NCBIfam" id="NF010785">
    <property type="entry name" value="PRK14188.1"/>
    <property type="match status" value="1"/>
</dbReference>
<dbReference type="NCBIfam" id="NF010790">
    <property type="entry name" value="PRK14194.1"/>
    <property type="match status" value="1"/>
</dbReference>
<dbReference type="PANTHER" id="PTHR48099:SF5">
    <property type="entry name" value="C-1-TETRAHYDROFOLATE SYNTHASE, CYTOPLASMIC"/>
    <property type="match status" value="1"/>
</dbReference>
<dbReference type="PANTHER" id="PTHR48099">
    <property type="entry name" value="C-1-TETRAHYDROFOLATE SYNTHASE, CYTOPLASMIC-RELATED"/>
    <property type="match status" value="1"/>
</dbReference>
<dbReference type="Pfam" id="PF00763">
    <property type="entry name" value="THF_DHG_CYH"/>
    <property type="match status" value="1"/>
</dbReference>
<dbReference type="Pfam" id="PF02882">
    <property type="entry name" value="THF_DHG_CYH_C"/>
    <property type="match status" value="1"/>
</dbReference>
<dbReference type="PRINTS" id="PR00085">
    <property type="entry name" value="THFDHDRGNASE"/>
</dbReference>
<dbReference type="SUPFAM" id="SSF53223">
    <property type="entry name" value="Aminoacid dehydrogenase-like, N-terminal domain"/>
    <property type="match status" value="1"/>
</dbReference>
<dbReference type="SUPFAM" id="SSF51735">
    <property type="entry name" value="NAD(P)-binding Rossmann-fold domains"/>
    <property type="match status" value="1"/>
</dbReference>
<dbReference type="PROSITE" id="PS00767">
    <property type="entry name" value="THF_DHG_CYH_2"/>
    <property type="match status" value="1"/>
</dbReference>
<gene>
    <name evidence="1" type="primary">folD2</name>
    <name type="ordered locus">Psyr_2225</name>
</gene>
<feature type="chain" id="PRO_0000268451" description="Bifunctional protein FolD 2">
    <location>
        <begin position="1"/>
        <end position="300"/>
    </location>
</feature>
<feature type="binding site" evidence="1">
    <location>
        <begin position="165"/>
        <end position="167"/>
    </location>
    <ligand>
        <name>NADP(+)</name>
        <dbReference type="ChEBI" id="CHEBI:58349"/>
    </ligand>
</feature>
<feature type="binding site" evidence="1">
    <location>
        <position position="190"/>
    </location>
    <ligand>
        <name>NADP(+)</name>
        <dbReference type="ChEBI" id="CHEBI:58349"/>
    </ligand>
</feature>
<feature type="binding site" evidence="1">
    <location>
        <position position="231"/>
    </location>
    <ligand>
        <name>NADP(+)</name>
        <dbReference type="ChEBI" id="CHEBI:58349"/>
    </ligand>
</feature>